<organism>
    <name type="scientific">Onchocerca ochengi</name>
    <name type="common">Filarial nematode worm</name>
    <dbReference type="NCBI Taxonomy" id="42157"/>
    <lineage>
        <taxon>Eukaryota</taxon>
        <taxon>Metazoa</taxon>
        <taxon>Ecdysozoa</taxon>
        <taxon>Nematoda</taxon>
        <taxon>Chromadorea</taxon>
        <taxon>Rhabditida</taxon>
        <taxon>Spirurina</taxon>
        <taxon>Spiruromorpha</taxon>
        <taxon>Filarioidea</taxon>
        <taxon>Onchocercidae</taxon>
        <taxon>Onchocerca</taxon>
    </lineage>
</organism>
<dbReference type="EMBL" id="AY050255">
    <property type="protein sequence ID" value="AAL33791.1"/>
    <property type="molecule type" value="mRNA"/>
</dbReference>
<dbReference type="SMR" id="Q8WT57"/>
<dbReference type="STRING" id="42157.Q8WT57"/>
<dbReference type="GlyCosmos" id="Q8WT57">
    <property type="glycosylation" value="3 sites, No reported glycans"/>
</dbReference>
<dbReference type="GO" id="GO:0005576">
    <property type="term" value="C:extracellular region"/>
    <property type="evidence" value="ECO:0000314"/>
    <property type="project" value="UniProtKB"/>
</dbReference>
<dbReference type="GO" id="GO:0005504">
    <property type="term" value="F:fatty acid binding"/>
    <property type="evidence" value="ECO:0000250"/>
    <property type="project" value="UniProtKB"/>
</dbReference>
<dbReference type="GO" id="GO:0016918">
    <property type="term" value="F:retinal binding"/>
    <property type="evidence" value="ECO:0007669"/>
    <property type="project" value="UniProtKB-KW"/>
</dbReference>
<dbReference type="GO" id="GO:0019841">
    <property type="term" value="F:retinol binding"/>
    <property type="evidence" value="ECO:0000250"/>
    <property type="project" value="UniProtKB"/>
</dbReference>
<dbReference type="FunFam" id="1.20.120.1100:FF:000001">
    <property type="entry name" value="Fatty-acid and retinol-binding protein 1"/>
    <property type="match status" value="1"/>
</dbReference>
<dbReference type="Gene3D" id="1.20.120.1100">
    <property type="match status" value="1"/>
</dbReference>
<dbReference type="InterPro" id="IPR008632">
    <property type="entry name" value="Gp-FAR-1"/>
</dbReference>
<dbReference type="PANTHER" id="PTHR31418">
    <property type="entry name" value="FATTY-ACID AND RETINOL-BINDING PROTEIN 1"/>
    <property type="match status" value="1"/>
</dbReference>
<dbReference type="PANTHER" id="PTHR31418:SF7">
    <property type="entry name" value="FATTY-ACID AND RETINOL-BINDING PROTEIN 1"/>
    <property type="match status" value="1"/>
</dbReference>
<dbReference type="Pfam" id="PF05823">
    <property type="entry name" value="Gp-FAR-1"/>
    <property type="match status" value="1"/>
</dbReference>
<comment type="function">
    <text evidence="1">Binds retinol and different fatty acids.</text>
</comment>
<comment type="subcellular location">
    <subcellularLocation>
        <location evidence="4">Secreted</location>
    </subcellularLocation>
</comment>
<comment type="PTM">
    <text evidence="4">N-glycosylated.</text>
</comment>
<comment type="similarity">
    <text evidence="2 5">Belongs to the fatty-acid and retinol-binding protein (FARBP) family.</text>
</comment>
<sequence>MYHQLILMALIGVIMANVVPFSMSNIPEEYKEFIPEEVKNFYKNLTQEDRQILRELASKHATFTNEDAALEALKNKSDKLYQKAVELRNFVKAKIDSLKPDAKAFVDEIIAKVRSLRPEDGQKLDMEKLKQAARDIIAKYEALNEETKEELKATFPNTTKIITNEKFKRIANSFLQKN</sequence>
<reference evidence="5 6" key="1">
    <citation type="journal article" date="2002" name="Mol. Biochem. Parasitol.">
        <title>The FAR proteins of filarial nematodes: secretion, glycosylation and lipid binding characteristics.</title>
        <authorList>
            <person name="Garofalo A."/>
            <person name="Klager S.L."/>
            <person name="Rowlinson M.C."/>
            <person name="Nirmalan N."/>
            <person name="Klion A.D."/>
            <person name="Allen J.E."/>
            <person name="Kennedy M.W."/>
            <person name="Bradley J.E."/>
        </authorList>
    </citation>
    <scope>NUCLEOTIDE SEQUENCE [MRNA]</scope>
    <scope>SUBCELLULAR LOCATION</scope>
    <scope>GLYCOSYLATION</scope>
</reference>
<protein>
    <recommendedName>
        <fullName>Fatty-acid and retinol-binding protein 1</fullName>
    </recommendedName>
    <alternativeName>
        <fullName>Oo-FAR-1</fullName>
    </alternativeName>
</protein>
<gene>
    <name evidence="6" type="primary">far-1</name>
</gene>
<name>FAR1_ONCOC</name>
<feature type="signal peptide" evidence="3">
    <location>
        <begin position="1"/>
        <end position="16"/>
    </location>
</feature>
<feature type="chain" id="PRO_0000008764" description="Fatty-acid and retinol-binding protein 1" evidence="3">
    <location>
        <begin position="17"/>
        <end position="178"/>
    </location>
</feature>
<feature type="coiled-coil region" evidence="3">
    <location>
        <begin position="67"/>
        <end position="89"/>
    </location>
</feature>
<feature type="coiled-coil region" evidence="3">
    <location>
        <begin position="122"/>
        <end position="154"/>
    </location>
</feature>
<feature type="glycosylation site" description="N-linked (GlcNAc...) asparagine" evidence="3">
    <location>
        <position position="44"/>
    </location>
</feature>
<feature type="glycosylation site" description="N-linked (GlcNAc...) asparagine" evidence="3">
    <location>
        <position position="75"/>
    </location>
</feature>
<feature type="glycosylation site" description="N-linked (GlcNAc...) asparagine" evidence="3">
    <location>
        <position position="157"/>
    </location>
</feature>
<proteinExistence type="evidence at protein level"/>
<evidence type="ECO:0000250" key="1"/>
<evidence type="ECO:0000250" key="2">
    <source>
        <dbReference type="UniProtKB" id="Q25619"/>
    </source>
</evidence>
<evidence type="ECO:0000255" key="3"/>
<evidence type="ECO:0000269" key="4">
    <source>
    </source>
</evidence>
<evidence type="ECO:0000305" key="5"/>
<evidence type="ECO:0000312" key="6">
    <source>
        <dbReference type="EMBL" id="AAL33791.1"/>
    </source>
</evidence>
<keyword id="KW-0175">Coiled coil</keyword>
<keyword id="KW-0325">Glycoprotein</keyword>
<keyword id="KW-0446">Lipid-binding</keyword>
<keyword id="KW-0683">Retinol-binding</keyword>
<keyword id="KW-0964">Secreted</keyword>
<keyword id="KW-0732">Signal</keyword>
<keyword id="KW-0845">Vitamin A</keyword>
<accession>Q8WT57</accession>